<protein>
    <recommendedName>
        <fullName evidence="1">Acetate kinase</fullName>
        <ecNumber evidence="1">2.7.2.1</ecNumber>
    </recommendedName>
    <alternativeName>
        <fullName evidence="1">Acetokinase</fullName>
    </alternativeName>
</protein>
<reference key="1">
    <citation type="journal article" date="2001" name="Nucleic Acids Res.">
        <title>The complete genome sequence of the murine respiratory pathogen Mycoplasma pulmonis.</title>
        <authorList>
            <person name="Chambaud I."/>
            <person name="Heilig R."/>
            <person name="Ferris S."/>
            <person name="Barbe V."/>
            <person name="Samson D."/>
            <person name="Galisson F."/>
            <person name="Moszer I."/>
            <person name="Dybvig K."/>
            <person name="Wroblewski H."/>
            <person name="Viari A."/>
            <person name="Rocha E.P.C."/>
            <person name="Blanchard A."/>
        </authorList>
    </citation>
    <scope>NUCLEOTIDE SEQUENCE [LARGE SCALE GENOMIC DNA]</scope>
    <source>
        <strain>UAB CTIP</strain>
    </source>
</reference>
<feature type="chain" id="PRO_1000089983" description="Acetate kinase">
    <location>
        <begin position="1"/>
        <end position="393"/>
    </location>
</feature>
<feature type="active site" description="Proton donor/acceptor" evidence="1">
    <location>
        <position position="144"/>
    </location>
</feature>
<feature type="binding site" evidence="1">
    <location>
        <position position="7"/>
    </location>
    <ligand>
        <name>Mg(2+)</name>
        <dbReference type="ChEBI" id="CHEBI:18420"/>
    </ligand>
</feature>
<feature type="binding site" evidence="1">
    <location>
        <position position="14"/>
    </location>
    <ligand>
        <name>ATP</name>
        <dbReference type="ChEBI" id="CHEBI:30616"/>
    </ligand>
</feature>
<feature type="binding site" evidence="1">
    <location>
        <position position="87"/>
    </location>
    <ligand>
        <name>substrate</name>
    </ligand>
</feature>
<feature type="binding site" evidence="1">
    <location>
        <begin position="202"/>
        <end position="206"/>
    </location>
    <ligand>
        <name>ATP</name>
        <dbReference type="ChEBI" id="CHEBI:30616"/>
    </ligand>
</feature>
<feature type="binding site" evidence="1">
    <location>
        <begin position="277"/>
        <end position="279"/>
    </location>
    <ligand>
        <name>ATP</name>
        <dbReference type="ChEBI" id="CHEBI:30616"/>
    </ligand>
</feature>
<feature type="binding site" evidence="1">
    <location>
        <begin position="326"/>
        <end position="330"/>
    </location>
    <ligand>
        <name>ATP</name>
        <dbReference type="ChEBI" id="CHEBI:30616"/>
    </ligand>
</feature>
<feature type="binding site" evidence="1">
    <location>
        <position position="380"/>
    </location>
    <ligand>
        <name>Mg(2+)</name>
        <dbReference type="ChEBI" id="CHEBI:18420"/>
    </ligand>
</feature>
<feature type="site" description="Transition state stabilizer" evidence="1">
    <location>
        <position position="176"/>
    </location>
</feature>
<feature type="site" description="Transition state stabilizer" evidence="1">
    <location>
        <position position="235"/>
    </location>
</feature>
<organism>
    <name type="scientific">Mycoplasmopsis pulmonis (strain UAB CTIP)</name>
    <name type="common">Mycoplasma pulmonis</name>
    <dbReference type="NCBI Taxonomy" id="272635"/>
    <lineage>
        <taxon>Bacteria</taxon>
        <taxon>Bacillati</taxon>
        <taxon>Mycoplasmatota</taxon>
        <taxon>Mycoplasmoidales</taxon>
        <taxon>Metamycoplasmataceae</taxon>
        <taxon>Mycoplasmopsis</taxon>
    </lineage>
</organism>
<proteinExistence type="inferred from homology"/>
<keyword id="KW-0067">ATP-binding</keyword>
<keyword id="KW-0963">Cytoplasm</keyword>
<keyword id="KW-0418">Kinase</keyword>
<keyword id="KW-0460">Magnesium</keyword>
<keyword id="KW-0479">Metal-binding</keyword>
<keyword id="KW-0547">Nucleotide-binding</keyword>
<keyword id="KW-1185">Reference proteome</keyword>
<keyword id="KW-0808">Transferase</keyword>
<gene>
    <name evidence="1" type="primary">ackA</name>
    <name type="ordered locus">MYPU_2380</name>
</gene>
<evidence type="ECO:0000255" key="1">
    <source>
        <dbReference type="HAMAP-Rule" id="MF_00020"/>
    </source>
</evidence>
<accession>Q98QX2</accession>
<sequence>MKILVINAGSSSIKFALFEKENLNQIASGIAERIGIENGIISISFDKKYQFEIDMKDHLEAAKKLLELFEQISLIKNADEIELIGFRVVHGGIELNKASKLDQETISIIEKSAKYAPLHNPGALQAIKAFQLALPKAKLSVNLDTAFHSSIDKINYSYPINYELAQKLGIRKFGFHGISHRFITNKLEKILNKKSVNFVNLHIGNGASLCAVKVSKSIDTSMGFTPLAGIMMGTRSGDIDPSIHEFVCKEENMSIEEFTSILNKQSGISGVSQISSDLRDVEEQYAKGNAQAIFALDLYSQKIADYAAIYLNKIAPQIDAIVFTAGVGENSAFVRKNVISRIKIKNIELDEALNSQKVGEYQLISTKNSEIPVYVIRTNEELMIASDAKKLNS</sequence>
<dbReference type="EC" id="2.7.2.1" evidence="1"/>
<dbReference type="EMBL" id="AL445563">
    <property type="protein sequence ID" value="CAC13411.1"/>
    <property type="molecule type" value="Genomic_DNA"/>
</dbReference>
<dbReference type="PIR" id="F90541">
    <property type="entry name" value="F90541"/>
</dbReference>
<dbReference type="RefSeq" id="WP_010925042.1">
    <property type="nucleotide sequence ID" value="NC_002771.1"/>
</dbReference>
<dbReference type="SMR" id="Q98QX2"/>
<dbReference type="STRING" id="272635.gene:17576826"/>
<dbReference type="KEGG" id="mpu:MYPU_2380"/>
<dbReference type="eggNOG" id="COG0282">
    <property type="taxonomic scope" value="Bacteria"/>
</dbReference>
<dbReference type="HOGENOM" id="CLU_020352_0_0_14"/>
<dbReference type="BioCyc" id="MPUL272635:G1GT6-239-MONOMER"/>
<dbReference type="UniPathway" id="UPA00340">
    <property type="reaction ID" value="UER00458"/>
</dbReference>
<dbReference type="Proteomes" id="UP000000528">
    <property type="component" value="Chromosome"/>
</dbReference>
<dbReference type="GO" id="GO:0005737">
    <property type="term" value="C:cytoplasm"/>
    <property type="evidence" value="ECO:0007669"/>
    <property type="project" value="UniProtKB-SubCell"/>
</dbReference>
<dbReference type="GO" id="GO:0008776">
    <property type="term" value="F:acetate kinase activity"/>
    <property type="evidence" value="ECO:0007669"/>
    <property type="project" value="UniProtKB-UniRule"/>
</dbReference>
<dbReference type="GO" id="GO:0005524">
    <property type="term" value="F:ATP binding"/>
    <property type="evidence" value="ECO:0007669"/>
    <property type="project" value="UniProtKB-KW"/>
</dbReference>
<dbReference type="GO" id="GO:0000287">
    <property type="term" value="F:magnesium ion binding"/>
    <property type="evidence" value="ECO:0007669"/>
    <property type="project" value="UniProtKB-UniRule"/>
</dbReference>
<dbReference type="GO" id="GO:0006083">
    <property type="term" value="P:acetate metabolic process"/>
    <property type="evidence" value="ECO:0007669"/>
    <property type="project" value="TreeGrafter"/>
</dbReference>
<dbReference type="GO" id="GO:0006085">
    <property type="term" value="P:acetyl-CoA biosynthetic process"/>
    <property type="evidence" value="ECO:0007669"/>
    <property type="project" value="UniProtKB-UniRule"/>
</dbReference>
<dbReference type="Gene3D" id="3.30.420.40">
    <property type="match status" value="2"/>
</dbReference>
<dbReference type="HAMAP" id="MF_00020">
    <property type="entry name" value="Acetate_kinase"/>
    <property type="match status" value="1"/>
</dbReference>
<dbReference type="InterPro" id="IPR004372">
    <property type="entry name" value="Ac/propionate_kinase"/>
</dbReference>
<dbReference type="InterPro" id="IPR000890">
    <property type="entry name" value="Aliphatic_acid_kin_short-chain"/>
</dbReference>
<dbReference type="InterPro" id="IPR023865">
    <property type="entry name" value="Aliphatic_acid_kinase_CS"/>
</dbReference>
<dbReference type="InterPro" id="IPR043129">
    <property type="entry name" value="ATPase_NBD"/>
</dbReference>
<dbReference type="NCBIfam" id="TIGR00016">
    <property type="entry name" value="ackA"/>
    <property type="match status" value="1"/>
</dbReference>
<dbReference type="NCBIfam" id="NF005520">
    <property type="entry name" value="PRK07157.1"/>
    <property type="match status" value="1"/>
</dbReference>
<dbReference type="PANTHER" id="PTHR21060">
    <property type="entry name" value="ACETATE KINASE"/>
    <property type="match status" value="1"/>
</dbReference>
<dbReference type="PANTHER" id="PTHR21060:SF15">
    <property type="entry name" value="ACETATE KINASE-RELATED"/>
    <property type="match status" value="1"/>
</dbReference>
<dbReference type="Pfam" id="PF00871">
    <property type="entry name" value="Acetate_kinase"/>
    <property type="match status" value="1"/>
</dbReference>
<dbReference type="PIRSF" id="PIRSF000722">
    <property type="entry name" value="Acetate_prop_kin"/>
    <property type="match status" value="1"/>
</dbReference>
<dbReference type="PRINTS" id="PR00471">
    <property type="entry name" value="ACETATEKNASE"/>
</dbReference>
<dbReference type="SUPFAM" id="SSF53067">
    <property type="entry name" value="Actin-like ATPase domain"/>
    <property type="match status" value="2"/>
</dbReference>
<dbReference type="PROSITE" id="PS01075">
    <property type="entry name" value="ACETATE_KINASE_1"/>
    <property type="match status" value="1"/>
</dbReference>
<name>ACKA_MYCPU</name>
<comment type="function">
    <text evidence="1">Catalyzes the formation of acetyl phosphate from acetate and ATP. Can also catalyze the reverse reaction.</text>
</comment>
<comment type="catalytic activity">
    <reaction evidence="1">
        <text>acetate + ATP = acetyl phosphate + ADP</text>
        <dbReference type="Rhea" id="RHEA:11352"/>
        <dbReference type="ChEBI" id="CHEBI:22191"/>
        <dbReference type="ChEBI" id="CHEBI:30089"/>
        <dbReference type="ChEBI" id="CHEBI:30616"/>
        <dbReference type="ChEBI" id="CHEBI:456216"/>
        <dbReference type="EC" id="2.7.2.1"/>
    </reaction>
</comment>
<comment type="cofactor">
    <cofactor evidence="1">
        <name>Mg(2+)</name>
        <dbReference type="ChEBI" id="CHEBI:18420"/>
    </cofactor>
    <cofactor evidence="1">
        <name>Mn(2+)</name>
        <dbReference type="ChEBI" id="CHEBI:29035"/>
    </cofactor>
    <text evidence="1">Mg(2+). Can also accept Mn(2+).</text>
</comment>
<comment type="pathway">
    <text evidence="1">Metabolic intermediate biosynthesis; acetyl-CoA biosynthesis; acetyl-CoA from acetate: step 1/2.</text>
</comment>
<comment type="subunit">
    <text evidence="1">Homodimer.</text>
</comment>
<comment type="subcellular location">
    <subcellularLocation>
        <location evidence="1">Cytoplasm</location>
    </subcellularLocation>
</comment>
<comment type="similarity">
    <text evidence="1">Belongs to the acetokinase family.</text>
</comment>